<proteinExistence type="inferred from homology"/>
<feature type="chain" id="PRO_1000123211" description="DNA mismatch repair protein MutL">
    <location>
        <begin position="1"/>
        <end position="633"/>
    </location>
</feature>
<evidence type="ECO:0000255" key="1">
    <source>
        <dbReference type="HAMAP-Rule" id="MF_00149"/>
    </source>
</evidence>
<accession>B9EBI5</accession>
<organism>
    <name type="scientific">Macrococcus caseolyticus (strain JCSC5402)</name>
    <name type="common">Macrococcoides caseolyticum</name>
    <dbReference type="NCBI Taxonomy" id="458233"/>
    <lineage>
        <taxon>Bacteria</taxon>
        <taxon>Bacillati</taxon>
        <taxon>Bacillota</taxon>
        <taxon>Bacilli</taxon>
        <taxon>Bacillales</taxon>
        <taxon>Staphylococcaceae</taxon>
        <taxon>Macrococcoides</taxon>
    </lineage>
</organism>
<sequence length="633" mass="72295">MGIIKTLDSTISNKIAAGEVIERPQSVVKELVENAIDAKSTSITIEVEEAGLSKIKVTDNGSGILEEDLELMFRRHATSKIENEHDLFHIRSLGFRGEALASIASVSKVRVTTCHDGSIGRQIDVIDGETVNRTLAQARQGTEITVESLFYNTPARLKYVKSLHTELGKITDIINRFVISFPYIKFTLVADGRVLIASNGNGKMQEAMAVVYGMKIAQDLVEVNGRTGDYEVHGFIAKPEHTRSNRHYMSLFINGRYIKNFMLTKAILSGYHTLLPVGRYPILAINIVMDPALVDVNVHPTKQEVRLSKESQLMELIERLIKEKIWKQNLIPKVEKKKVLETFQQQKFEYDLLREHRDKTKQSDYSEQTAVNQIDEKFKEQHKTAQLDKQRVPDGESTQKTTGFISDSAAELDTTSEILPEKNESSDVIENISTDTSREKRKIPYMEIVGQVHGTYIIAQNEDGMFMIDQHAAQERIKYEYFKKQIGDVGLEMQSLLIPITVTLSKDEAINLNKINILLKDIGIHLEHFGGNDYIINDIPVWFPDNYEETVQELIDYALQHRQIDLNKFREETAIMMSCKKSIKANHYLRITDMNYLLEELAHTVEPYTCPHGRPIIIQFTTYELEKLFKRVM</sequence>
<keyword id="KW-0227">DNA damage</keyword>
<keyword id="KW-0234">DNA repair</keyword>
<keyword id="KW-1185">Reference proteome</keyword>
<comment type="function">
    <text evidence="1">This protein is involved in the repair of mismatches in DNA. It is required for dam-dependent methyl-directed DNA mismatch repair. May act as a 'molecular matchmaker', a protein that promotes the formation of a stable complex between two or more DNA-binding proteins in an ATP-dependent manner without itself being part of a final effector complex.</text>
</comment>
<comment type="similarity">
    <text evidence="1">Belongs to the DNA mismatch repair MutL/HexB family.</text>
</comment>
<gene>
    <name evidence="1" type="primary">mutL</name>
    <name type="ordered locus">MCCL_0889</name>
</gene>
<name>MUTL_MACCJ</name>
<protein>
    <recommendedName>
        <fullName evidence="1">DNA mismatch repair protein MutL</fullName>
    </recommendedName>
</protein>
<reference key="1">
    <citation type="journal article" date="2009" name="J. Bacteriol.">
        <title>Complete genome sequence of Macrococcus caseolyticus strain JCSCS5402, reflecting the ancestral genome of the human-pathogenic staphylococci.</title>
        <authorList>
            <person name="Baba T."/>
            <person name="Kuwahara-Arai K."/>
            <person name="Uchiyama I."/>
            <person name="Takeuchi F."/>
            <person name="Ito T."/>
            <person name="Hiramatsu K."/>
        </authorList>
    </citation>
    <scope>NUCLEOTIDE SEQUENCE [LARGE SCALE GENOMIC DNA]</scope>
    <source>
        <strain>JCSC5402</strain>
    </source>
</reference>
<dbReference type="EMBL" id="AP009484">
    <property type="protein sequence ID" value="BAH17596.1"/>
    <property type="molecule type" value="Genomic_DNA"/>
</dbReference>
<dbReference type="RefSeq" id="WP_012656796.1">
    <property type="nucleotide sequence ID" value="NC_011999.1"/>
</dbReference>
<dbReference type="SMR" id="B9EBI5"/>
<dbReference type="STRING" id="458233.MCCL_0889"/>
<dbReference type="KEGG" id="mcl:MCCL_0889"/>
<dbReference type="eggNOG" id="COG0323">
    <property type="taxonomic scope" value="Bacteria"/>
</dbReference>
<dbReference type="HOGENOM" id="CLU_004131_4_1_9"/>
<dbReference type="OrthoDB" id="9763467at2"/>
<dbReference type="Proteomes" id="UP000001383">
    <property type="component" value="Chromosome"/>
</dbReference>
<dbReference type="GO" id="GO:0032300">
    <property type="term" value="C:mismatch repair complex"/>
    <property type="evidence" value="ECO:0007669"/>
    <property type="project" value="InterPro"/>
</dbReference>
<dbReference type="GO" id="GO:0005524">
    <property type="term" value="F:ATP binding"/>
    <property type="evidence" value="ECO:0007669"/>
    <property type="project" value="InterPro"/>
</dbReference>
<dbReference type="GO" id="GO:0016887">
    <property type="term" value="F:ATP hydrolysis activity"/>
    <property type="evidence" value="ECO:0007669"/>
    <property type="project" value="InterPro"/>
</dbReference>
<dbReference type="GO" id="GO:0140664">
    <property type="term" value="F:ATP-dependent DNA damage sensor activity"/>
    <property type="evidence" value="ECO:0007669"/>
    <property type="project" value="InterPro"/>
</dbReference>
<dbReference type="GO" id="GO:0030983">
    <property type="term" value="F:mismatched DNA binding"/>
    <property type="evidence" value="ECO:0007669"/>
    <property type="project" value="InterPro"/>
</dbReference>
<dbReference type="GO" id="GO:0006298">
    <property type="term" value="P:mismatch repair"/>
    <property type="evidence" value="ECO:0007669"/>
    <property type="project" value="UniProtKB-UniRule"/>
</dbReference>
<dbReference type="CDD" id="cd16926">
    <property type="entry name" value="HATPase_MutL-MLH-PMS-like"/>
    <property type="match status" value="1"/>
</dbReference>
<dbReference type="CDD" id="cd00782">
    <property type="entry name" value="MutL_Trans"/>
    <property type="match status" value="1"/>
</dbReference>
<dbReference type="FunFam" id="3.30.565.10:FF:000003">
    <property type="entry name" value="DNA mismatch repair endonuclease MutL"/>
    <property type="match status" value="1"/>
</dbReference>
<dbReference type="Gene3D" id="3.30.230.10">
    <property type="match status" value="1"/>
</dbReference>
<dbReference type="Gene3D" id="3.30.565.10">
    <property type="entry name" value="Histidine kinase-like ATPase, C-terminal domain"/>
    <property type="match status" value="1"/>
</dbReference>
<dbReference type="Gene3D" id="3.30.1540.20">
    <property type="entry name" value="MutL, C-terminal domain, dimerisation subdomain"/>
    <property type="match status" value="1"/>
</dbReference>
<dbReference type="Gene3D" id="3.30.1370.100">
    <property type="entry name" value="MutL, C-terminal domain, regulatory subdomain"/>
    <property type="match status" value="1"/>
</dbReference>
<dbReference type="HAMAP" id="MF_00149">
    <property type="entry name" value="DNA_mis_repair"/>
    <property type="match status" value="1"/>
</dbReference>
<dbReference type="InterPro" id="IPR014762">
    <property type="entry name" value="DNA_mismatch_repair_CS"/>
</dbReference>
<dbReference type="InterPro" id="IPR020667">
    <property type="entry name" value="DNA_mismatch_repair_MutL"/>
</dbReference>
<dbReference type="InterPro" id="IPR013507">
    <property type="entry name" value="DNA_mismatch_S5_2-like"/>
</dbReference>
<dbReference type="InterPro" id="IPR036890">
    <property type="entry name" value="HATPase_C_sf"/>
</dbReference>
<dbReference type="InterPro" id="IPR002099">
    <property type="entry name" value="MutL/Mlh/PMS"/>
</dbReference>
<dbReference type="InterPro" id="IPR038973">
    <property type="entry name" value="MutL/Mlh/Pms-like"/>
</dbReference>
<dbReference type="InterPro" id="IPR014790">
    <property type="entry name" value="MutL_C"/>
</dbReference>
<dbReference type="InterPro" id="IPR042120">
    <property type="entry name" value="MutL_C_dimsub"/>
</dbReference>
<dbReference type="InterPro" id="IPR042121">
    <property type="entry name" value="MutL_C_regsub"/>
</dbReference>
<dbReference type="InterPro" id="IPR037198">
    <property type="entry name" value="MutL_C_sf"/>
</dbReference>
<dbReference type="InterPro" id="IPR020568">
    <property type="entry name" value="Ribosomal_Su5_D2-typ_SF"/>
</dbReference>
<dbReference type="InterPro" id="IPR014721">
    <property type="entry name" value="Ribsml_uS5_D2-typ_fold_subgr"/>
</dbReference>
<dbReference type="NCBIfam" id="TIGR00585">
    <property type="entry name" value="mutl"/>
    <property type="match status" value="1"/>
</dbReference>
<dbReference type="NCBIfam" id="NF000950">
    <property type="entry name" value="PRK00095.1-3"/>
    <property type="match status" value="1"/>
</dbReference>
<dbReference type="PANTHER" id="PTHR10073">
    <property type="entry name" value="DNA MISMATCH REPAIR PROTEIN MLH, PMS, MUTL"/>
    <property type="match status" value="1"/>
</dbReference>
<dbReference type="PANTHER" id="PTHR10073:SF12">
    <property type="entry name" value="DNA MISMATCH REPAIR PROTEIN MLH1"/>
    <property type="match status" value="1"/>
</dbReference>
<dbReference type="Pfam" id="PF01119">
    <property type="entry name" value="DNA_mis_repair"/>
    <property type="match status" value="1"/>
</dbReference>
<dbReference type="Pfam" id="PF13589">
    <property type="entry name" value="HATPase_c_3"/>
    <property type="match status" value="1"/>
</dbReference>
<dbReference type="Pfam" id="PF08676">
    <property type="entry name" value="MutL_C"/>
    <property type="match status" value="1"/>
</dbReference>
<dbReference type="SMART" id="SM01340">
    <property type="entry name" value="DNA_mis_repair"/>
    <property type="match status" value="1"/>
</dbReference>
<dbReference type="SMART" id="SM00853">
    <property type="entry name" value="MutL_C"/>
    <property type="match status" value="1"/>
</dbReference>
<dbReference type="SUPFAM" id="SSF55874">
    <property type="entry name" value="ATPase domain of HSP90 chaperone/DNA topoisomerase II/histidine kinase"/>
    <property type="match status" value="1"/>
</dbReference>
<dbReference type="SUPFAM" id="SSF118116">
    <property type="entry name" value="DNA mismatch repair protein MutL"/>
    <property type="match status" value="1"/>
</dbReference>
<dbReference type="SUPFAM" id="SSF54211">
    <property type="entry name" value="Ribosomal protein S5 domain 2-like"/>
    <property type="match status" value="1"/>
</dbReference>
<dbReference type="PROSITE" id="PS00058">
    <property type="entry name" value="DNA_MISMATCH_REPAIR_1"/>
    <property type="match status" value="1"/>
</dbReference>